<name>BADH_BETVU</name>
<feature type="transit peptide" description="Chloroplast" evidence="2">
    <location>
        <begin position="1"/>
        <end position="7"/>
    </location>
</feature>
<feature type="chain" id="PRO_0000007181" description="Betaine aldehyde dehydrogenase, chloroplastic">
    <location>
        <begin position="8"/>
        <end position="500"/>
    </location>
</feature>
<feature type="active site" description="Proton acceptor" evidence="3 4">
    <location>
        <position position="260"/>
    </location>
</feature>
<feature type="active site" description="Nucleophile" evidence="3 4">
    <location>
        <position position="294"/>
    </location>
</feature>
<feature type="binding site" evidence="1">
    <location>
        <begin position="238"/>
        <end position="243"/>
    </location>
    <ligand>
        <name>NAD(+)</name>
        <dbReference type="ChEBI" id="CHEBI:57540"/>
    </ligand>
</feature>
<feature type="site" description="Transition state stabilizer" evidence="1">
    <location>
        <position position="162"/>
    </location>
</feature>
<feature type="sequence variant">
    <original>E</original>
    <variation>D</variation>
    <location>
        <position position="412"/>
    </location>
</feature>
<organism>
    <name type="scientific">Beta vulgaris</name>
    <name type="common">Sugar beet</name>
    <dbReference type="NCBI Taxonomy" id="161934"/>
    <lineage>
        <taxon>Eukaryota</taxon>
        <taxon>Viridiplantae</taxon>
        <taxon>Streptophyta</taxon>
        <taxon>Embryophyta</taxon>
        <taxon>Tracheophyta</taxon>
        <taxon>Spermatophyta</taxon>
        <taxon>Magnoliopsida</taxon>
        <taxon>eudicotyledons</taxon>
        <taxon>Gunneridae</taxon>
        <taxon>Pentapetalae</taxon>
        <taxon>Caryophyllales</taxon>
        <taxon>Chenopodiaceae</taxon>
        <taxon>Betoideae</taxon>
        <taxon>Beta</taxon>
    </lineage>
</organism>
<comment type="catalytic activity">
    <reaction>
        <text>betaine aldehyde + NAD(+) + H2O = glycine betaine + NADH + 2 H(+)</text>
        <dbReference type="Rhea" id="RHEA:15305"/>
        <dbReference type="ChEBI" id="CHEBI:15377"/>
        <dbReference type="ChEBI" id="CHEBI:15378"/>
        <dbReference type="ChEBI" id="CHEBI:15710"/>
        <dbReference type="ChEBI" id="CHEBI:17750"/>
        <dbReference type="ChEBI" id="CHEBI:57540"/>
        <dbReference type="ChEBI" id="CHEBI:57945"/>
        <dbReference type="EC" id="1.2.1.8"/>
    </reaction>
</comment>
<comment type="pathway">
    <text>Amine and polyamine biosynthesis; betaine biosynthesis via choline pathway; betaine from betaine aldehyde: step 1/1.</text>
</comment>
<comment type="subunit">
    <text>Homodimer.</text>
</comment>
<comment type="subcellular location">
    <subcellularLocation>
        <location>Plastid</location>
        <location>Chloroplast</location>
    </subcellularLocation>
</comment>
<comment type="similarity">
    <text evidence="5">Belongs to the aldehyde dehydrogenase family.</text>
</comment>
<reference key="1">
    <citation type="journal article" date="1992" name="Plant Mol. Biol.">
        <title>Salt-inducible betaine aldehyde dehydrogenase from sugar beet: cDNA cloning and expression.</title>
        <authorList>
            <person name="McCue K.F."/>
            <person name="Hanson A.D."/>
        </authorList>
    </citation>
    <scope>NUCLEOTIDE SEQUENCE [MRNA]</scope>
</reference>
<sequence>MSMPIPSRQLFIDGEWREPIKKNRIPIINPSNEEIIGDIPAGSSEDIEVAVAAARRALKRNKGREWAATSGAHRARYLRAIAAKVTERKDHFVKLETIDSGKPFDEAVLDIDDVATCFEYFAGQAEAMDAKQKAPVTLPMERFKSHVLRQPIGVVGLITPWNYPLLMATWKIAPALAAGCTAVLKPSELASITCLEFGEVCNEVGLPPGVLNIVTGLGPDAGAPLAAHPDVDKVAFTGSSATGSKVMASAAQLVKPVTLELGGKSPIIVFEDVDIDQVVEWTMFGCFWTNGQICSATSRLLVHESIAAEFIDRLVKWTKNIKISDPFEEGCRLGPVISKGQYDKIMKFISTAKSEGATILCGGSRPEHLKKGYFIEPTIISDISTSMQIWREEVFGPVLCVKTFSSEDEALELANDTEYGLASAVFSKDLERCERVSKLLESGAVWVNCSQPCFVHAPWGGIKRSGFGRELGEWGIENYLNIKQVTSDISNEPWGWYKSP</sequence>
<evidence type="ECO:0000250" key="1"/>
<evidence type="ECO:0000255" key="2"/>
<evidence type="ECO:0000255" key="3">
    <source>
        <dbReference type="PROSITE-ProRule" id="PRU10007"/>
    </source>
</evidence>
<evidence type="ECO:0000255" key="4">
    <source>
        <dbReference type="PROSITE-ProRule" id="PRU10008"/>
    </source>
</evidence>
<evidence type="ECO:0000305" key="5"/>
<proteinExistence type="evidence at transcript level"/>
<keyword id="KW-0150">Chloroplast</keyword>
<keyword id="KW-0520">NAD</keyword>
<keyword id="KW-0560">Oxidoreductase</keyword>
<keyword id="KW-0934">Plastid</keyword>
<keyword id="KW-0809">Transit peptide</keyword>
<protein>
    <recommendedName>
        <fullName>Betaine aldehyde dehydrogenase, chloroplastic</fullName>
        <shortName>BADH</shortName>
        <ecNumber>1.2.1.8</ecNumber>
    </recommendedName>
</protein>
<accession>P28237</accession>
<dbReference type="EC" id="1.2.1.8"/>
<dbReference type="EMBL" id="X58463">
    <property type="protein sequence ID" value="CAA41377.1"/>
    <property type="molecule type" value="mRNA"/>
</dbReference>
<dbReference type="EMBL" id="X58462">
    <property type="protein sequence ID" value="CAA41376.1"/>
    <property type="molecule type" value="mRNA"/>
</dbReference>
<dbReference type="PIR" id="S19135">
    <property type="entry name" value="S19135"/>
</dbReference>
<dbReference type="SMR" id="P28237"/>
<dbReference type="KEGG" id="bvg:104894202"/>
<dbReference type="OMA" id="GQAICEH"/>
<dbReference type="UniPathway" id="UPA00529">
    <property type="reaction ID" value="UER00386"/>
</dbReference>
<dbReference type="GO" id="GO:0009507">
    <property type="term" value="C:chloroplast"/>
    <property type="evidence" value="ECO:0007669"/>
    <property type="project" value="UniProtKB-SubCell"/>
</dbReference>
<dbReference type="GO" id="GO:0019145">
    <property type="term" value="F:aminobutyraldehyde dehydrogenase (NAD+) activity"/>
    <property type="evidence" value="ECO:0007669"/>
    <property type="project" value="UniProtKB-ARBA"/>
</dbReference>
<dbReference type="GO" id="GO:0008802">
    <property type="term" value="F:betaine-aldehyde dehydrogenase (NAD+) activity"/>
    <property type="evidence" value="ECO:0007669"/>
    <property type="project" value="UniProtKB-EC"/>
</dbReference>
<dbReference type="GO" id="GO:0110095">
    <property type="term" value="P:cellular detoxification of aldehyde"/>
    <property type="evidence" value="ECO:0007669"/>
    <property type="project" value="UniProtKB-ARBA"/>
</dbReference>
<dbReference type="GO" id="GO:0019285">
    <property type="term" value="P:glycine betaine biosynthetic process from choline"/>
    <property type="evidence" value="ECO:0007669"/>
    <property type="project" value="UniProtKB-UniPathway"/>
</dbReference>
<dbReference type="CDD" id="cd07110">
    <property type="entry name" value="ALDH_F10_BADH"/>
    <property type="match status" value="1"/>
</dbReference>
<dbReference type="FunFam" id="3.40.309.10:FF:000012">
    <property type="entry name" value="Betaine aldehyde dehydrogenase"/>
    <property type="match status" value="1"/>
</dbReference>
<dbReference type="FunFam" id="3.40.605.10:FF:000007">
    <property type="entry name" value="NAD/NADP-dependent betaine aldehyde dehydrogenase"/>
    <property type="match status" value="1"/>
</dbReference>
<dbReference type="Gene3D" id="3.40.605.10">
    <property type="entry name" value="Aldehyde Dehydrogenase, Chain A, domain 1"/>
    <property type="match status" value="1"/>
</dbReference>
<dbReference type="Gene3D" id="3.40.309.10">
    <property type="entry name" value="Aldehyde Dehydrogenase, Chain A, domain 2"/>
    <property type="match status" value="1"/>
</dbReference>
<dbReference type="InterPro" id="IPR016161">
    <property type="entry name" value="Ald_DH/histidinol_DH"/>
</dbReference>
<dbReference type="InterPro" id="IPR016163">
    <property type="entry name" value="Ald_DH_C"/>
</dbReference>
<dbReference type="InterPro" id="IPR016160">
    <property type="entry name" value="Ald_DH_CS_CYS"/>
</dbReference>
<dbReference type="InterPro" id="IPR029510">
    <property type="entry name" value="Ald_DH_CS_GLU"/>
</dbReference>
<dbReference type="InterPro" id="IPR016162">
    <property type="entry name" value="Ald_DH_N"/>
</dbReference>
<dbReference type="InterPro" id="IPR015590">
    <property type="entry name" value="Aldehyde_DH_dom"/>
</dbReference>
<dbReference type="PANTHER" id="PTHR43860">
    <property type="entry name" value="BETAINE ALDEHYDE DEHYDROGENASE"/>
    <property type="match status" value="1"/>
</dbReference>
<dbReference type="PANTHER" id="PTHR43860:SF2">
    <property type="entry name" value="BETAINE ALDEHYDE DEHYDROGENASE-RELATED"/>
    <property type="match status" value="1"/>
</dbReference>
<dbReference type="Pfam" id="PF00171">
    <property type="entry name" value="Aldedh"/>
    <property type="match status" value="1"/>
</dbReference>
<dbReference type="SUPFAM" id="SSF53720">
    <property type="entry name" value="ALDH-like"/>
    <property type="match status" value="1"/>
</dbReference>
<dbReference type="PROSITE" id="PS00070">
    <property type="entry name" value="ALDEHYDE_DEHYDR_CYS"/>
    <property type="match status" value="1"/>
</dbReference>
<dbReference type="PROSITE" id="PS00687">
    <property type="entry name" value="ALDEHYDE_DEHYDR_GLU"/>
    <property type="match status" value="1"/>
</dbReference>